<evidence type="ECO:0000250" key="1">
    <source>
        <dbReference type="UniProtKB" id="Q99278"/>
    </source>
</evidence>
<evidence type="ECO:0000269" key="2">
    <source>
    </source>
</evidence>
<evidence type="ECO:0000305" key="3"/>
<keyword id="KW-0539">Nucleus</keyword>
<keyword id="KW-1185">Reference proteome</keyword>
<keyword id="KW-0804">Transcription</keyword>
<keyword id="KW-0805">Transcription regulation</keyword>
<organism>
    <name type="scientific">Arabidopsis thaliana</name>
    <name type="common">Mouse-ear cress</name>
    <dbReference type="NCBI Taxonomy" id="3702"/>
    <lineage>
        <taxon>Eukaryota</taxon>
        <taxon>Viridiplantae</taxon>
        <taxon>Streptophyta</taxon>
        <taxon>Embryophyta</taxon>
        <taxon>Tracheophyta</taxon>
        <taxon>Spermatophyta</taxon>
        <taxon>Magnoliopsida</taxon>
        <taxon>eudicotyledons</taxon>
        <taxon>Gunneridae</taxon>
        <taxon>Pentapetalae</taxon>
        <taxon>rosids</taxon>
        <taxon>malvids</taxon>
        <taxon>Brassicales</taxon>
        <taxon>Brassicaceae</taxon>
        <taxon>Camelineae</taxon>
        <taxon>Arabidopsis</taxon>
    </lineage>
</organism>
<comment type="function">
    <text evidence="1">Component of the Mediator complex, a coactivator involved in the regulated transcription of nearly all RNA polymerase II-dependent genes. Mediator functions as a bridge to convey information from gene-specific regulatory proteins to the basal RNA polymerase II transcription machinery. The Mediator complex, having a compact conformation in its free form, is recruited to promoters by direct interactions with regulatory proteins and serves for the assembly of a functional pre-initiation complex with RNA polymerase II and the general transcription factors.</text>
</comment>
<comment type="subunit">
    <text evidence="2">Component of the Mediator complex.</text>
</comment>
<comment type="interaction">
    <interactant intactId="EBI-1386244">
        <id>Q6ID77</id>
    </interactant>
    <interactant intactId="EBI-2012188">
        <id>Q8RXD6</id>
        <label>HUB1</label>
    </interactant>
    <organismsDiffer>false</organismsDiffer>
    <experiments>2</experiments>
</comment>
<comment type="interaction">
    <interactant intactId="EBI-1386244">
        <id>Q6ID77</id>
    </interactant>
    <interactant intactId="EBI-1386287">
        <id>Q8LCH5</id>
        <label>MED22B</label>
    </interactant>
    <organismsDiffer>false</organismsDiffer>
    <experiments>3</experiments>
</comment>
<comment type="interaction">
    <interactant intactId="EBI-1386244">
        <id>Q6ID77</id>
    </interactant>
    <interactant intactId="EBI-1386187">
        <id>F4IXJ7</id>
        <label>MED6</label>
    </interactant>
    <organismsDiffer>false</organismsDiffer>
    <experiments>3</experiments>
</comment>
<comment type="subcellular location">
    <subcellularLocation>
        <location evidence="3">Nucleus</location>
    </subcellularLocation>
</comment>
<comment type="similarity">
    <text evidence="3">Belongs to the Mediator complex subunit 11 family.</text>
</comment>
<feature type="chain" id="PRO_0000418117" description="Mediator of RNA polymerase II transcription subunit 11">
    <location>
        <begin position="1"/>
        <end position="115"/>
    </location>
</feature>
<dbReference type="EMBL" id="AC010870">
    <property type="status" value="NOT_ANNOTATED_CDS"/>
    <property type="molecule type" value="Genomic_DNA"/>
</dbReference>
<dbReference type="EMBL" id="CP002686">
    <property type="protein sequence ID" value="AEE73666.1"/>
    <property type="molecule type" value="Genomic_DNA"/>
</dbReference>
<dbReference type="EMBL" id="CP002686">
    <property type="protein sequence ID" value="ANM65648.1"/>
    <property type="molecule type" value="Genomic_DNA"/>
</dbReference>
<dbReference type="EMBL" id="BT014796">
    <property type="protein sequence ID" value="AAT41779.1"/>
    <property type="molecule type" value="mRNA"/>
</dbReference>
<dbReference type="EMBL" id="BT015691">
    <property type="protein sequence ID" value="AAU29468.1"/>
    <property type="molecule type" value="mRNA"/>
</dbReference>
<dbReference type="EMBL" id="AK229334">
    <property type="protein sequence ID" value="BAF01197.1"/>
    <property type="molecule type" value="mRNA"/>
</dbReference>
<dbReference type="RefSeq" id="NP_001327600.1">
    <property type="nucleotide sequence ID" value="NM_001337338.1"/>
</dbReference>
<dbReference type="RefSeq" id="NP_974205.1">
    <property type="nucleotide sequence ID" value="NM_202476.3"/>
</dbReference>
<dbReference type="SMR" id="Q6ID77"/>
<dbReference type="BioGRID" id="30476">
    <property type="interactions" value="8"/>
</dbReference>
<dbReference type="FunCoup" id="Q6ID77">
    <property type="interactions" value="279"/>
</dbReference>
<dbReference type="IntAct" id="Q6ID77">
    <property type="interactions" value="11"/>
</dbReference>
<dbReference type="STRING" id="3702.Q6ID77"/>
<dbReference type="iPTMnet" id="Q6ID77"/>
<dbReference type="PaxDb" id="3702-AT3G01435.1"/>
<dbReference type="ProteomicsDB" id="239051"/>
<dbReference type="EnsemblPlants" id="AT3G01435.1">
    <property type="protein sequence ID" value="AT3G01435.1"/>
    <property type="gene ID" value="AT3G01435"/>
</dbReference>
<dbReference type="EnsemblPlants" id="AT3G01435.4">
    <property type="protein sequence ID" value="AT3G01435.4"/>
    <property type="gene ID" value="AT3G01435"/>
</dbReference>
<dbReference type="GeneID" id="2745869"/>
<dbReference type="Gramene" id="AT3G01435.1">
    <property type="protein sequence ID" value="AT3G01435.1"/>
    <property type="gene ID" value="AT3G01435"/>
</dbReference>
<dbReference type="Gramene" id="AT3G01435.4">
    <property type="protein sequence ID" value="AT3G01435.4"/>
    <property type="gene ID" value="AT3G01435"/>
</dbReference>
<dbReference type="KEGG" id="ath:AT3G01435"/>
<dbReference type="Araport" id="AT3G01435"/>
<dbReference type="TAIR" id="AT3G01435"/>
<dbReference type="eggNOG" id="ENOG502S141">
    <property type="taxonomic scope" value="Eukaryota"/>
</dbReference>
<dbReference type="HOGENOM" id="CLU_141299_0_0_1"/>
<dbReference type="InParanoid" id="Q6ID77"/>
<dbReference type="OMA" id="KLDCVIG"/>
<dbReference type="PhylomeDB" id="Q6ID77"/>
<dbReference type="PRO" id="PR:Q6ID77"/>
<dbReference type="Proteomes" id="UP000006548">
    <property type="component" value="Chromosome 3"/>
</dbReference>
<dbReference type="ExpressionAtlas" id="Q6ID77">
    <property type="expression patterns" value="baseline and differential"/>
</dbReference>
<dbReference type="GO" id="GO:0016592">
    <property type="term" value="C:mediator complex"/>
    <property type="evidence" value="ECO:0000314"/>
    <property type="project" value="UniProtKB"/>
</dbReference>
<dbReference type="GO" id="GO:0003712">
    <property type="term" value="F:transcription coregulator activity"/>
    <property type="evidence" value="ECO:0007669"/>
    <property type="project" value="InterPro"/>
</dbReference>
<dbReference type="GO" id="GO:0006357">
    <property type="term" value="P:regulation of transcription by RNA polymerase II"/>
    <property type="evidence" value="ECO:0007669"/>
    <property type="project" value="InterPro"/>
</dbReference>
<dbReference type="FunFam" id="1.10.287.3490:FF:000002">
    <property type="entry name" value="Mediator of RNA polymerase II transcription subunit 11"/>
    <property type="match status" value="1"/>
</dbReference>
<dbReference type="Gene3D" id="1.10.287.3490">
    <property type="match status" value="1"/>
</dbReference>
<dbReference type="InterPro" id="IPR019404">
    <property type="entry name" value="Mediator_Med11"/>
</dbReference>
<dbReference type="PANTHER" id="PTHR22890">
    <property type="entry name" value="MEDIATOR OF RNA POLYMERASE II TRANSCRIPTION SUBUNIT 11"/>
    <property type="match status" value="1"/>
</dbReference>
<dbReference type="Pfam" id="PF10280">
    <property type="entry name" value="Med11"/>
    <property type="match status" value="1"/>
</dbReference>
<proteinExistence type="evidence at protein level"/>
<sequence>MDPQTQNTSLQRLQNVENRVVKVLELAGGVMEELASPSGPKKEFVNSHCREFMQSMKDIQVTLREEIKSACEYRPFEKCDYNARIANEICFQKLEYVLTQLEDLKQTADRYPSSD</sequence>
<protein>
    <recommendedName>
        <fullName>Mediator of RNA polymerase II transcription subunit 11</fullName>
    </recommendedName>
</protein>
<reference key="1">
    <citation type="journal article" date="2000" name="Nature">
        <title>Sequence and analysis of chromosome 3 of the plant Arabidopsis thaliana.</title>
        <authorList>
            <person name="Salanoubat M."/>
            <person name="Lemcke K."/>
            <person name="Rieger M."/>
            <person name="Ansorge W."/>
            <person name="Unseld M."/>
            <person name="Fartmann B."/>
            <person name="Valle G."/>
            <person name="Bloecker H."/>
            <person name="Perez-Alonso M."/>
            <person name="Obermaier B."/>
            <person name="Delseny M."/>
            <person name="Boutry M."/>
            <person name="Grivell L.A."/>
            <person name="Mache R."/>
            <person name="Puigdomenech P."/>
            <person name="De Simone V."/>
            <person name="Choisne N."/>
            <person name="Artiguenave F."/>
            <person name="Robert C."/>
            <person name="Brottier P."/>
            <person name="Wincker P."/>
            <person name="Cattolico L."/>
            <person name="Weissenbach J."/>
            <person name="Saurin W."/>
            <person name="Quetier F."/>
            <person name="Schaefer M."/>
            <person name="Mueller-Auer S."/>
            <person name="Gabel C."/>
            <person name="Fuchs M."/>
            <person name="Benes V."/>
            <person name="Wurmbach E."/>
            <person name="Drzonek H."/>
            <person name="Erfle H."/>
            <person name="Jordan N."/>
            <person name="Bangert S."/>
            <person name="Wiedelmann R."/>
            <person name="Kranz H."/>
            <person name="Voss H."/>
            <person name="Holland R."/>
            <person name="Brandt P."/>
            <person name="Nyakatura G."/>
            <person name="Vezzi A."/>
            <person name="D'Angelo M."/>
            <person name="Pallavicini A."/>
            <person name="Toppo S."/>
            <person name="Simionati B."/>
            <person name="Conrad A."/>
            <person name="Hornischer K."/>
            <person name="Kauer G."/>
            <person name="Loehnert T.-H."/>
            <person name="Nordsiek G."/>
            <person name="Reichelt J."/>
            <person name="Scharfe M."/>
            <person name="Schoen O."/>
            <person name="Bargues M."/>
            <person name="Terol J."/>
            <person name="Climent J."/>
            <person name="Navarro P."/>
            <person name="Collado C."/>
            <person name="Perez-Perez A."/>
            <person name="Ottenwaelder B."/>
            <person name="Duchemin D."/>
            <person name="Cooke R."/>
            <person name="Laudie M."/>
            <person name="Berger-Llauro C."/>
            <person name="Purnelle B."/>
            <person name="Masuy D."/>
            <person name="de Haan M."/>
            <person name="Maarse A.C."/>
            <person name="Alcaraz J.-P."/>
            <person name="Cottet A."/>
            <person name="Casacuberta E."/>
            <person name="Monfort A."/>
            <person name="Argiriou A."/>
            <person name="Flores M."/>
            <person name="Liguori R."/>
            <person name="Vitale D."/>
            <person name="Mannhaupt G."/>
            <person name="Haase D."/>
            <person name="Schoof H."/>
            <person name="Rudd S."/>
            <person name="Zaccaria P."/>
            <person name="Mewes H.-W."/>
            <person name="Mayer K.F.X."/>
            <person name="Kaul S."/>
            <person name="Town C.D."/>
            <person name="Koo H.L."/>
            <person name="Tallon L.J."/>
            <person name="Jenkins J."/>
            <person name="Rooney T."/>
            <person name="Rizzo M."/>
            <person name="Walts A."/>
            <person name="Utterback T."/>
            <person name="Fujii C.Y."/>
            <person name="Shea T.P."/>
            <person name="Creasy T.H."/>
            <person name="Haas B."/>
            <person name="Maiti R."/>
            <person name="Wu D."/>
            <person name="Peterson J."/>
            <person name="Van Aken S."/>
            <person name="Pai G."/>
            <person name="Militscher J."/>
            <person name="Sellers P."/>
            <person name="Gill J.E."/>
            <person name="Feldblyum T.V."/>
            <person name="Preuss D."/>
            <person name="Lin X."/>
            <person name="Nierman W.C."/>
            <person name="Salzberg S.L."/>
            <person name="White O."/>
            <person name="Venter J.C."/>
            <person name="Fraser C.M."/>
            <person name="Kaneko T."/>
            <person name="Nakamura Y."/>
            <person name="Sato S."/>
            <person name="Kato T."/>
            <person name="Asamizu E."/>
            <person name="Sasamoto S."/>
            <person name="Kimura T."/>
            <person name="Idesawa K."/>
            <person name="Kawashima K."/>
            <person name="Kishida Y."/>
            <person name="Kiyokawa C."/>
            <person name="Kohara M."/>
            <person name="Matsumoto M."/>
            <person name="Matsuno A."/>
            <person name="Muraki A."/>
            <person name="Nakayama S."/>
            <person name="Nakazaki N."/>
            <person name="Shinpo S."/>
            <person name="Takeuchi C."/>
            <person name="Wada T."/>
            <person name="Watanabe A."/>
            <person name="Yamada M."/>
            <person name="Yasuda M."/>
            <person name="Tabata S."/>
        </authorList>
    </citation>
    <scope>NUCLEOTIDE SEQUENCE [LARGE SCALE GENOMIC DNA]</scope>
    <source>
        <strain>cv. Columbia</strain>
    </source>
</reference>
<reference key="2">
    <citation type="journal article" date="2017" name="Plant J.">
        <title>Araport11: a complete reannotation of the Arabidopsis thaliana reference genome.</title>
        <authorList>
            <person name="Cheng C.Y."/>
            <person name="Krishnakumar V."/>
            <person name="Chan A.P."/>
            <person name="Thibaud-Nissen F."/>
            <person name="Schobel S."/>
            <person name="Town C.D."/>
        </authorList>
    </citation>
    <scope>GENOME REANNOTATION</scope>
    <source>
        <strain>cv. Columbia</strain>
    </source>
</reference>
<reference key="3">
    <citation type="submission" date="2004-09" db="EMBL/GenBank/DDBJ databases">
        <title>Arabidopsis ORF clones.</title>
        <authorList>
            <person name="Shinn P."/>
            <person name="Chen H."/>
            <person name="Cheuk R."/>
            <person name="Kim C.J."/>
            <person name="Ecker J.R."/>
        </authorList>
    </citation>
    <scope>NUCLEOTIDE SEQUENCE [LARGE SCALE MRNA]</scope>
</reference>
<reference key="4">
    <citation type="submission" date="2006-07" db="EMBL/GenBank/DDBJ databases">
        <title>Large-scale analysis of RIKEN Arabidopsis full-length (RAFL) cDNAs.</title>
        <authorList>
            <person name="Totoki Y."/>
            <person name="Seki M."/>
            <person name="Ishida J."/>
            <person name="Nakajima M."/>
            <person name="Enju A."/>
            <person name="Kamiya A."/>
            <person name="Narusaka M."/>
            <person name="Shin-i T."/>
            <person name="Nakagawa M."/>
            <person name="Sakamoto N."/>
            <person name="Oishi K."/>
            <person name="Kohara Y."/>
            <person name="Kobayashi M."/>
            <person name="Toyoda A."/>
            <person name="Sakaki Y."/>
            <person name="Sakurai T."/>
            <person name="Iida K."/>
            <person name="Akiyama K."/>
            <person name="Satou M."/>
            <person name="Toyoda T."/>
            <person name="Konagaya A."/>
            <person name="Carninci P."/>
            <person name="Kawai J."/>
            <person name="Hayashizaki Y."/>
            <person name="Shinozaki K."/>
        </authorList>
    </citation>
    <scope>NUCLEOTIDE SEQUENCE [LARGE SCALE MRNA]</scope>
    <source>
        <strain>cv. Columbia</strain>
    </source>
</reference>
<reference key="5">
    <citation type="journal article" date="2007" name="Mol. Cell">
        <title>Purification of a plant mediator from Arabidopsis thaliana identifies PFT1 as the Med25 subunit.</title>
        <authorList>
            <person name="Baeckstroem S."/>
            <person name="Elfving N."/>
            <person name="Nilsson R."/>
            <person name="Wingsle G."/>
            <person name="Bjoerklund S."/>
        </authorList>
    </citation>
    <scope>IDENTIFICATION BY MASS SPECTROMETRY</scope>
    <scope>SUBUNIT</scope>
    <scope>NOMENCLATURE</scope>
</reference>
<reference key="6">
    <citation type="journal article" date="2011" name="Plant Physiol.">
        <title>The Mediator complex in plants: structure, phylogeny, and expression profiling of representative genes in a dicot (Arabidopsis) and a monocot (rice) during reproduction and abiotic stress.</title>
        <authorList>
            <person name="Mathur S."/>
            <person name="Vyas S."/>
            <person name="Kapoor S."/>
            <person name="Tyagi A.K."/>
        </authorList>
    </citation>
    <scope>IDENTIFICATION</scope>
    <scope>NOMENCLATURE</scope>
</reference>
<name>MED11_ARATH</name>
<accession>Q6ID77</accession>
<gene>
    <name type="primary">MED11</name>
    <name type="synonym">MED11_1</name>
    <name type="ordered locus">At3g01435</name>
    <name type="ORF">T13O15</name>
</gene>